<sequence>MNLKPLNDRVLVKRLESEEKTAGGLYIPDTAKEKPSRGEVIAVGPGKTADDGKVIAMTVKTGDVVLFNKYAGTEVKLDGVDHLVMREDDILAIIQ</sequence>
<reference key="1">
    <citation type="journal article" date="2011" name="J. Bacteriol.">
        <title>Complete genome sequence and updated annotation of Desulfovibrio alaskensis G20.</title>
        <authorList>
            <person name="Hauser L.J."/>
            <person name="Land M.L."/>
            <person name="Brown S.D."/>
            <person name="Larimer F."/>
            <person name="Keller K.L."/>
            <person name="Rapp-Giles B.J."/>
            <person name="Price M.N."/>
            <person name="Lin M."/>
            <person name="Bruce D.C."/>
            <person name="Detter J.C."/>
            <person name="Tapia R."/>
            <person name="Han C.S."/>
            <person name="Goodwin L.A."/>
            <person name="Cheng J.F."/>
            <person name="Pitluck S."/>
            <person name="Copeland A."/>
            <person name="Lucas S."/>
            <person name="Nolan M."/>
            <person name="Lapidus A.L."/>
            <person name="Palumbo A.V."/>
            <person name="Wall J.D."/>
        </authorList>
    </citation>
    <scope>NUCLEOTIDE SEQUENCE [LARGE SCALE GENOMIC DNA]</scope>
    <source>
        <strain>ATCC BAA-1058 / DSM 17464 / G20</strain>
    </source>
</reference>
<feature type="chain" id="PRO_1000025247" description="Co-chaperonin GroES">
    <location>
        <begin position="1"/>
        <end position="95"/>
    </location>
</feature>
<accession>Q30YH5</accession>
<name>CH10_OLEA2</name>
<keyword id="KW-0143">Chaperone</keyword>
<keyword id="KW-0963">Cytoplasm</keyword>
<keyword id="KW-1185">Reference proteome</keyword>
<comment type="function">
    <text evidence="1">Together with the chaperonin GroEL, plays an essential role in assisting protein folding. The GroEL-GroES system forms a nano-cage that allows encapsulation of the non-native substrate proteins and provides a physical environment optimized to promote and accelerate protein folding. GroES binds to the apical surface of the GroEL ring, thereby capping the opening of the GroEL channel.</text>
</comment>
<comment type="subunit">
    <text evidence="1">Heptamer of 7 subunits arranged in a ring. Interacts with the chaperonin GroEL.</text>
</comment>
<comment type="subcellular location">
    <subcellularLocation>
        <location evidence="1">Cytoplasm</location>
    </subcellularLocation>
</comment>
<comment type="similarity">
    <text evidence="1">Belongs to the GroES chaperonin family.</text>
</comment>
<dbReference type="EMBL" id="CP000112">
    <property type="protein sequence ID" value="ABB39271.1"/>
    <property type="molecule type" value="Genomic_DNA"/>
</dbReference>
<dbReference type="RefSeq" id="WP_011368337.1">
    <property type="nucleotide sequence ID" value="NC_007519.1"/>
</dbReference>
<dbReference type="SMR" id="Q30YH5"/>
<dbReference type="STRING" id="207559.Dde_2474"/>
<dbReference type="KEGG" id="dde:Dde_2474"/>
<dbReference type="eggNOG" id="COG0234">
    <property type="taxonomic scope" value="Bacteria"/>
</dbReference>
<dbReference type="HOGENOM" id="CLU_132825_2_0_7"/>
<dbReference type="Proteomes" id="UP000002710">
    <property type="component" value="Chromosome"/>
</dbReference>
<dbReference type="GO" id="GO:0005737">
    <property type="term" value="C:cytoplasm"/>
    <property type="evidence" value="ECO:0007669"/>
    <property type="project" value="UniProtKB-SubCell"/>
</dbReference>
<dbReference type="GO" id="GO:0005524">
    <property type="term" value="F:ATP binding"/>
    <property type="evidence" value="ECO:0007669"/>
    <property type="project" value="InterPro"/>
</dbReference>
<dbReference type="GO" id="GO:0046872">
    <property type="term" value="F:metal ion binding"/>
    <property type="evidence" value="ECO:0007669"/>
    <property type="project" value="TreeGrafter"/>
</dbReference>
<dbReference type="GO" id="GO:0044183">
    <property type="term" value="F:protein folding chaperone"/>
    <property type="evidence" value="ECO:0007669"/>
    <property type="project" value="InterPro"/>
</dbReference>
<dbReference type="GO" id="GO:0051087">
    <property type="term" value="F:protein-folding chaperone binding"/>
    <property type="evidence" value="ECO:0007669"/>
    <property type="project" value="TreeGrafter"/>
</dbReference>
<dbReference type="GO" id="GO:0051082">
    <property type="term" value="F:unfolded protein binding"/>
    <property type="evidence" value="ECO:0007669"/>
    <property type="project" value="TreeGrafter"/>
</dbReference>
<dbReference type="GO" id="GO:0051085">
    <property type="term" value="P:chaperone cofactor-dependent protein refolding"/>
    <property type="evidence" value="ECO:0007669"/>
    <property type="project" value="TreeGrafter"/>
</dbReference>
<dbReference type="CDD" id="cd00320">
    <property type="entry name" value="cpn10"/>
    <property type="match status" value="1"/>
</dbReference>
<dbReference type="FunFam" id="2.30.33.40:FF:000001">
    <property type="entry name" value="10 kDa chaperonin"/>
    <property type="match status" value="1"/>
</dbReference>
<dbReference type="Gene3D" id="2.30.33.40">
    <property type="entry name" value="GroES chaperonin"/>
    <property type="match status" value="1"/>
</dbReference>
<dbReference type="HAMAP" id="MF_00580">
    <property type="entry name" value="CH10"/>
    <property type="match status" value="1"/>
</dbReference>
<dbReference type="InterPro" id="IPR020818">
    <property type="entry name" value="Chaperonin_GroES"/>
</dbReference>
<dbReference type="InterPro" id="IPR037124">
    <property type="entry name" value="Chaperonin_GroES_sf"/>
</dbReference>
<dbReference type="InterPro" id="IPR018369">
    <property type="entry name" value="Chaprnonin_Cpn10_CS"/>
</dbReference>
<dbReference type="InterPro" id="IPR011032">
    <property type="entry name" value="GroES-like_sf"/>
</dbReference>
<dbReference type="NCBIfam" id="NF001527">
    <property type="entry name" value="PRK00364.1-2"/>
    <property type="match status" value="1"/>
</dbReference>
<dbReference type="NCBIfam" id="NF001529">
    <property type="entry name" value="PRK00364.1-5"/>
    <property type="match status" value="1"/>
</dbReference>
<dbReference type="NCBIfam" id="NF001531">
    <property type="entry name" value="PRK00364.2-2"/>
    <property type="match status" value="1"/>
</dbReference>
<dbReference type="NCBIfam" id="NF001533">
    <property type="entry name" value="PRK00364.2-4"/>
    <property type="match status" value="1"/>
</dbReference>
<dbReference type="NCBIfam" id="NF001534">
    <property type="entry name" value="PRK00364.2-5"/>
    <property type="match status" value="1"/>
</dbReference>
<dbReference type="PANTHER" id="PTHR10772">
    <property type="entry name" value="10 KDA HEAT SHOCK PROTEIN"/>
    <property type="match status" value="1"/>
</dbReference>
<dbReference type="PANTHER" id="PTHR10772:SF63">
    <property type="entry name" value="20 KDA CHAPERONIN, CHLOROPLASTIC"/>
    <property type="match status" value="1"/>
</dbReference>
<dbReference type="Pfam" id="PF00166">
    <property type="entry name" value="Cpn10"/>
    <property type="match status" value="1"/>
</dbReference>
<dbReference type="PRINTS" id="PR00297">
    <property type="entry name" value="CHAPERONIN10"/>
</dbReference>
<dbReference type="SMART" id="SM00883">
    <property type="entry name" value="Cpn10"/>
    <property type="match status" value="1"/>
</dbReference>
<dbReference type="SUPFAM" id="SSF50129">
    <property type="entry name" value="GroES-like"/>
    <property type="match status" value="1"/>
</dbReference>
<dbReference type="PROSITE" id="PS00681">
    <property type="entry name" value="CHAPERONINS_CPN10"/>
    <property type="match status" value="1"/>
</dbReference>
<gene>
    <name evidence="1" type="primary">groES</name>
    <name evidence="1" type="synonym">groS</name>
    <name type="ordered locus">Dde_2474</name>
</gene>
<evidence type="ECO:0000255" key="1">
    <source>
        <dbReference type="HAMAP-Rule" id="MF_00580"/>
    </source>
</evidence>
<proteinExistence type="inferred from homology"/>
<organism>
    <name type="scientific">Oleidesulfovibrio alaskensis (strain ATCC BAA-1058 / DSM 17464 / G20)</name>
    <name type="common">Desulfovibrio alaskensis</name>
    <dbReference type="NCBI Taxonomy" id="207559"/>
    <lineage>
        <taxon>Bacteria</taxon>
        <taxon>Pseudomonadati</taxon>
        <taxon>Thermodesulfobacteriota</taxon>
        <taxon>Desulfovibrionia</taxon>
        <taxon>Desulfovibrionales</taxon>
        <taxon>Desulfovibrionaceae</taxon>
        <taxon>Oleidesulfovibrio</taxon>
    </lineage>
</organism>
<protein>
    <recommendedName>
        <fullName evidence="1">Co-chaperonin GroES</fullName>
    </recommendedName>
    <alternativeName>
        <fullName evidence="1">10 kDa chaperonin</fullName>
    </alternativeName>
    <alternativeName>
        <fullName evidence="1">Chaperonin-10</fullName>
        <shortName evidence="1">Cpn10</shortName>
    </alternativeName>
</protein>